<reference evidence="7" key="1">
    <citation type="journal article" date="2002" name="Nat. Neurosci.">
        <title>The olfactory receptor gene superfamily of the mouse.</title>
        <authorList>
            <person name="Zhang X."/>
            <person name="Firestein S."/>
        </authorList>
    </citation>
    <scope>NUCLEOTIDE SEQUENCE [GENOMIC DNA]</scope>
</reference>
<reference evidence="8" key="2">
    <citation type="journal article" date="2003" name="Genome Biol.">
        <title>Odorant receptor expressed sequence tags demonstrate olfactory expression of over 400 genes, extensive alternate splicing and unequal expression levels.</title>
        <authorList>
            <person name="Young J.M."/>
            <person name="Shykind B.M."/>
            <person name="Lane R.P."/>
            <person name="Tonnes-Priddy L."/>
            <person name="Ross J.A."/>
            <person name="Walker M."/>
            <person name="Williams E.M."/>
            <person name="Trask B.J."/>
        </authorList>
    </citation>
    <scope>NUCLEOTIDE SEQUENCE [GENOMIC DNA]</scope>
</reference>
<reference key="3">
    <citation type="journal article" date="2009" name="PLoS Biol.">
        <title>Lineage-specific biology revealed by a finished genome assembly of the mouse.</title>
        <authorList>
            <person name="Church D.M."/>
            <person name="Goodstadt L."/>
            <person name="Hillier L.W."/>
            <person name="Zody M.C."/>
            <person name="Goldstein S."/>
            <person name="She X."/>
            <person name="Bult C.J."/>
            <person name="Agarwala R."/>
            <person name="Cherry J.L."/>
            <person name="DiCuccio M."/>
            <person name="Hlavina W."/>
            <person name="Kapustin Y."/>
            <person name="Meric P."/>
            <person name="Maglott D."/>
            <person name="Birtle Z."/>
            <person name="Marques A.C."/>
            <person name="Graves T."/>
            <person name="Zhou S."/>
            <person name="Teague B."/>
            <person name="Potamousis K."/>
            <person name="Churas C."/>
            <person name="Place M."/>
            <person name="Herschleb J."/>
            <person name="Runnheim R."/>
            <person name="Forrest D."/>
            <person name="Amos-Landgraf J."/>
            <person name="Schwartz D.C."/>
            <person name="Cheng Z."/>
            <person name="Lindblad-Toh K."/>
            <person name="Eichler E.E."/>
            <person name="Ponting C.P."/>
        </authorList>
    </citation>
    <scope>NUCLEOTIDE SEQUENCE [LARGE SCALE GENOMIC DNA]</scope>
    <source>
        <strain>C57BL/6J</strain>
    </source>
</reference>
<reference evidence="6 10" key="4">
    <citation type="journal article" date="1994" name="Cell">
        <title>Allelic inactivation regulates olfactory receptor gene expression.</title>
        <authorList>
            <person name="Chess A."/>
            <person name="Simon I."/>
            <person name="Cedar H."/>
            <person name="Axel R."/>
        </authorList>
    </citation>
    <scope>NUCLEOTIDE SEQUENCE [MRNA] OF 1-10</scope>
    <scope>TISSUE SPECIFICITY</scope>
    <source>
        <strain evidence="4">C57BL/6J</strain>
        <tissue evidence="4">Nasal epithelium</tissue>
    </source>
</reference>
<feature type="chain" id="PRO_0000233898" description="Olfactory receptor 1E16">
    <location>
        <begin position="1"/>
        <end position="314"/>
    </location>
</feature>
<feature type="topological domain" description="Extracellular" evidence="2">
    <location>
        <begin position="1"/>
        <end position="29"/>
    </location>
</feature>
<feature type="transmembrane region" description="Helical; Name=1" evidence="2">
    <location>
        <begin position="30"/>
        <end position="50"/>
    </location>
</feature>
<feature type="topological domain" description="Cytoplasmic" evidence="2">
    <location>
        <begin position="51"/>
        <end position="57"/>
    </location>
</feature>
<feature type="transmembrane region" description="Helical; Name=2" evidence="2">
    <location>
        <begin position="58"/>
        <end position="78"/>
    </location>
</feature>
<feature type="topological domain" description="Extracellular" evidence="2">
    <location>
        <begin position="79"/>
        <end position="97"/>
    </location>
</feature>
<feature type="transmembrane region" description="Helical; Name=3" evidence="2">
    <location>
        <begin position="98"/>
        <end position="118"/>
    </location>
</feature>
<feature type="topological domain" description="Cytoplasmic" evidence="2">
    <location>
        <begin position="119"/>
        <end position="143"/>
    </location>
</feature>
<feature type="transmembrane region" description="Helical; Name=4" evidence="2">
    <location>
        <begin position="144"/>
        <end position="164"/>
    </location>
</feature>
<feature type="topological domain" description="Extracellular" evidence="2">
    <location>
        <begin position="165"/>
        <end position="196"/>
    </location>
</feature>
<feature type="transmembrane region" description="Helical; Name=5" evidence="2">
    <location>
        <begin position="197"/>
        <end position="217"/>
    </location>
</feature>
<feature type="topological domain" description="Cytoplasmic" evidence="2">
    <location>
        <begin position="218"/>
        <end position="239"/>
    </location>
</feature>
<feature type="transmembrane region" description="Helical; Name=6" evidence="2">
    <location>
        <begin position="240"/>
        <end position="260"/>
    </location>
</feature>
<feature type="topological domain" description="Extracellular" evidence="2">
    <location>
        <begin position="261"/>
        <end position="271"/>
    </location>
</feature>
<feature type="transmembrane region" description="Helical; Name=7" evidence="2">
    <location>
        <begin position="272"/>
        <end position="292"/>
    </location>
</feature>
<feature type="topological domain" description="Cytoplasmic" evidence="2">
    <location>
        <begin position="293"/>
        <end position="314"/>
    </location>
</feature>
<feature type="glycosylation site" description="N-linked (GlcNAc...) asparagine" evidence="2">
    <location>
        <position position="5"/>
    </location>
</feature>
<feature type="glycosylation site" description="N-linked (GlcNAc...) asparagine" evidence="2">
    <location>
        <position position="265"/>
    </location>
</feature>
<feature type="glycosylation site" description="N-linked (GlcNAc...) asparagine" evidence="2">
    <location>
        <position position="266"/>
    </location>
</feature>
<feature type="disulfide bond" evidence="3">
    <location>
        <begin position="97"/>
        <end position="179"/>
    </location>
</feature>
<gene>
    <name evidence="9" type="primary">Or1e16</name>
    <name evidence="5" type="synonym">Mor135-13</name>
    <name evidence="9" type="synonym">Olfr1</name>
</gene>
<proteinExistence type="evidence at transcript level"/>
<dbReference type="EMBL" id="AY073167">
    <property type="protein sequence ID" value="AAL60830.1"/>
    <property type="molecule type" value="Genomic_DNA"/>
</dbReference>
<dbReference type="EMBL" id="AY317476">
    <property type="protein sequence ID" value="AAP70908.1"/>
    <property type="molecule type" value="Genomic_DNA"/>
</dbReference>
<dbReference type="EMBL" id="AL645739">
    <property type="status" value="NOT_ANNOTATED_CDS"/>
    <property type="molecule type" value="Genomic_DNA"/>
</dbReference>
<dbReference type="CCDS" id="CCDS25008.1"/>
<dbReference type="PIR" id="C54823">
    <property type="entry name" value="C54823"/>
</dbReference>
<dbReference type="RefSeq" id="NP_667132.1">
    <property type="nucleotide sequence ID" value="NM_146921.2"/>
</dbReference>
<dbReference type="SMR" id="Q8VGI1"/>
<dbReference type="FunCoup" id="Q8VGI1">
    <property type="interactions" value="1527"/>
</dbReference>
<dbReference type="STRING" id="10090.ENSMUSP00000113707"/>
<dbReference type="GlyCosmos" id="Q8VGI1">
    <property type="glycosylation" value="3 sites, No reported glycans"/>
</dbReference>
<dbReference type="GlyGen" id="Q8VGI1">
    <property type="glycosylation" value="3 sites"/>
</dbReference>
<dbReference type="PaxDb" id="10090-ENSMUSP00000113707"/>
<dbReference type="DNASU" id="258923"/>
<dbReference type="Ensembl" id="ENSMUST00000120303.9">
    <property type="protein sequence ID" value="ENSMUSP00000113707.2"/>
    <property type="gene ID" value="ENSMUSG00000069823.12"/>
</dbReference>
<dbReference type="GeneID" id="258923"/>
<dbReference type="KEGG" id="mmu:258923"/>
<dbReference type="UCSC" id="uc007kap.2">
    <property type="organism name" value="mouse"/>
</dbReference>
<dbReference type="AGR" id="MGI:102698"/>
<dbReference type="CTD" id="258923"/>
<dbReference type="MGI" id="MGI:102698">
    <property type="gene designation" value="Or1e16"/>
</dbReference>
<dbReference type="VEuPathDB" id="HostDB:ENSMUSG00000069823"/>
<dbReference type="eggNOG" id="ENOG502SI5J">
    <property type="taxonomic scope" value="Eukaryota"/>
</dbReference>
<dbReference type="GeneTree" id="ENSGT00940000153124"/>
<dbReference type="HOGENOM" id="CLU_012526_1_3_1"/>
<dbReference type="InParanoid" id="Q8VGI1"/>
<dbReference type="OMA" id="TMTERNQ"/>
<dbReference type="OrthoDB" id="9975554at2759"/>
<dbReference type="PhylomeDB" id="Q8VGI1"/>
<dbReference type="TreeFam" id="TF337210"/>
<dbReference type="BioGRID-ORCS" id="258923">
    <property type="hits" value="3 hits in 69 CRISPR screens"/>
</dbReference>
<dbReference type="PRO" id="PR:Q8VGI1"/>
<dbReference type="Proteomes" id="UP000000589">
    <property type="component" value="Chromosome 11"/>
</dbReference>
<dbReference type="RNAct" id="Q8VGI1">
    <property type="molecule type" value="protein"/>
</dbReference>
<dbReference type="ExpressionAtlas" id="Q8VGI1">
    <property type="expression patterns" value="baseline and differential"/>
</dbReference>
<dbReference type="GO" id="GO:0016020">
    <property type="term" value="C:membrane"/>
    <property type="evidence" value="ECO:0000247"/>
    <property type="project" value="MGI"/>
</dbReference>
<dbReference type="GO" id="GO:0005886">
    <property type="term" value="C:plasma membrane"/>
    <property type="evidence" value="ECO:0007669"/>
    <property type="project" value="UniProtKB-SubCell"/>
</dbReference>
<dbReference type="GO" id="GO:0004930">
    <property type="term" value="F:G protein-coupled receptor activity"/>
    <property type="evidence" value="ECO:0007669"/>
    <property type="project" value="UniProtKB-KW"/>
</dbReference>
<dbReference type="GO" id="GO:0004984">
    <property type="term" value="F:olfactory receptor activity"/>
    <property type="evidence" value="ECO:0000247"/>
    <property type="project" value="MGI"/>
</dbReference>
<dbReference type="GO" id="GO:0007186">
    <property type="term" value="P:G protein-coupled receptor signaling pathway"/>
    <property type="evidence" value="ECO:0000247"/>
    <property type="project" value="MGI"/>
</dbReference>
<dbReference type="GO" id="GO:0007608">
    <property type="term" value="P:sensory perception of smell"/>
    <property type="evidence" value="ECO:0000247"/>
    <property type="project" value="MGI"/>
</dbReference>
<dbReference type="CDD" id="cd15918">
    <property type="entry name" value="7tmA_OR1_7-like"/>
    <property type="match status" value="1"/>
</dbReference>
<dbReference type="FunFam" id="1.10.1220.70:FF:000001">
    <property type="entry name" value="Olfactory receptor"/>
    <property type="match status" value="1"/>
</dbReference>
<dbReference type="FunFam" id="1.20.1070.10:FF:000009">
    <property type="entry name" value="Olfactory receptor"/>
    <property type="match status" value="1"/>
</dbReference>
<dbReference type="Gene3D" id="1.20.1070.10">
    <property type="entry name" value="Rhodopsin 7-helix transmembrane proteins"/>
    <property type="match status" value="1"/>
</dbReference>
<dbReference type="InterPro" id="IPR000276">
    <property type="entry name" value="GPCR_Rhodpsn"/>
</dbReference>
<dbReference type="InterPro" id="IPR017452">
    <property type="entry name" value="GPCR_Rhodpsn_7TM"/>
</dbReference>
<dbReference type="InterPro" id="IPR000725">
    <property type="entry name" value="Olfact_rcpt"/>
</dbReference>
<dbReference type="PANTHER" id="PTHR48001">
    <property type="entry name" value="OLFACTORY RECEPTOR"/>
    <property type="match status" value="1"/>
</dbReference>
<dbReference type="Pfam" id="PF13853">
    <property type="entry name" value="7tm_4"/>
    <property type="match status" value="1"/>
</dbReference>
<dbReference type="PRINTS" id="PR00237">
    <property type="entry name" value="GPCRRHODOPSN"/>
</dbReference>
<dbReference type="PRINTS" id="PR00245">
    <property type="entry name" value="OLFACTORYR"/>
</dbReference>
<dbReference type="SUPFAM" id="SSF81321">
    <property type="entry name" value="Family A G protein-coupled receptor-like"/>
    <property type="match status" value="1"/>
</dbReference>
<dbReference type="PROSITE" id="PS00237">
    <property type="entry name" value="G_PROTEIN_RECEP_F1_1"/>
    <property type="match status" value="1"/>
</dbReference>
<dbReference type="PROSITE" id="PS50262">
    <property type="entry name" value="G_PROTEIN_RECEP_F1_2"/>
    <property type="match status" value="1"/>
</dbReference>
<organism>
    <name type="scientific">Mus musculus</name>
    <name type="common">Mouse</name>
    <dbReference type="NCBI Taxonomy" id="10090"/>
    <lineage>
        <taxon>Eukaryota</taxon>
        <taxon>Metazoa</taxon>
        <taxon>Chordata</taxon>
        <taxon>Craniata</taxon>
        <taxon>Vertebrata</taxon>
        <taxon>Euteleostomi</taxon>
        <taxon>Mammalia</taxon>
        <taxon>Eutheria</taxon>
        <taxon>Euarchontoglires</taxon>
        <taxon>Glires</taxon>
        <taxon>Rodentia</taxon>
        <taxon>Myomorpha</taxon>
        <taxon>Muroidea</taxon>
        <taxon>Muridae</taxon>
        <taxon>Murinae</taxon>
        <taxon>Mus</taxon>
        <taxon>Mus</taxon>
    </lineage>
</organism>
<accession>Q8VGI1</accession>
<evidence type="ECO:0000250" key="1">
    <source>
        <dbReference type="UniProtKB" id="P70526"/>
    </source>
</evidence>
<evidence type="ECO:0000255" key="2"/>
<evidence type="ECO:0000255" key="3">
    <source>
        <dbReference type="PROSITE-ProRule" id="PRU00521"/>
    </source>
</evidence>
<evidence type="ECO:0000269" key="4">
    <source>
    </source>
</evidence>
<evidence type="ECO:0000303" key="5">
    <source>
    </source>
</evidence>
<evidence type="ECO:0000305" key="6"/>
<evidence type="ECO:0000312" key="7">
    <source>
        <dbReference type="EMBL" id="AAL60830.1"/>
    </source>
</evidence>
<evidence type="ECO:0000312" key="8">
    <source>
        <dbReference type="EMBL" id="AAP70908.1"/>
    </source>
</evidence>
<evidence type="ECO:0000312" key="9">
    <source>
        <dbReference type="MGI" id="MGI:102698"/>
    </source>
</evidence>
<evidence type="ECO:0000312" key="10">
    <source>
        <dbReference type="PIR" id="C54823"/>
    </source>
</evidence>
<name>O1E16_MOUSE</name>
<sequence length="314" mass="35479">MTERNKTVISQFLLLGLPIPPEHQQLFYALFLVMYLTTVLGNLIIIILIILDSHLHTPMYLFLSNLSFSDLCFSSVTMPKLLQNMQSQVPSIPYAGCLAQIYFFLFFGDLGNFLLVAMAYDRYVAICYPLHYTTIMSPRLCVSLVVLSWVLTTFHAMLHTLLMARLSFCEDNVIPHYFCDMSALLKLACSDTRVNEVVIFIVASIFLVLPFALITMSYVRIVSSILKVPSSQGIYKAFSTCGSHLSVVSLFYGTVIGLYLSPSSNNSTVKDTVMSLMYTVVTPMLNPFIYSLRNRDIKGALERVFCKRKIQLNL</sequence>
<comment type="function">
    <text evidence="1">Odorant receptor. Activated by a lily-derived aldehyde as well as other odorants. May signal through an inositol 1,4,5-trisphosphate (IP3) second messenger system (By similarity).</text>
</comment>
<comment type="subcellular location">
    <subcellularLocation>
        <location evidence="6">Cell membrane</location>
        <topology evidence="2">Multi-pass membrane protein</topology>
    </subcellularLocation>
</comment>
<comment type="tissue specificity">
    <text evidence="4">Olfactory epithelium.</text>
</comment>
<comment type="similarity">
    <text evidence="3">Belongs to the G-protein coupled receptor 1 family.</text>
</comment>
<protein>
    <recommendedName>
        <fullName evidence="6">Olfactory receptor 1E16</fullName>
    </recommendedName>
    <alternativeName>
        <fullName>Odorant receptor I54</fullName>
    </alternativeName>
    <alternativeName>
        <fullName>Olfactory receptor 1</fullName>
    </alternativeName>
    <alternativeName>
        <fullName>Olfactory receptor 135-13</fullName>
    </alternativeName>
</protein>
<keyword id="KW-1003">Cell membrane</keyword>
<keyword id="KW-1015">Disulfide bond</keyword>
<keyword id="KW-0297">G-protein coupled receptor</keyword>
<keyword id="KW-0325">Glycoprotein</keyword>
<keyword id="KW-0472">Membrane</keyword>
<keyword id="KW-0552">Olfaction</keyword>
<keyword id="KW-0675">Receptor</keyword>
<keyword id="KW-1185">Reference proteome</keyword>
<keyword id="KW-0716">Sensory transduction</keyword>
<keyword id="KW-0807">Transducer</keyword>
<keyword id="KW-0812">Transmembrane</keyword>
<keyword id="KW-1133">Transmembrane helix</keyword>